<proteinExistence type="inferred from homology"/>
<accession>Q8RFE0</accession>
<evidence type="ECO:0000255" key="1">
    <source>
        <dbReference type="HAMAP-Rule" id="MF_00115"/>
    </source>
</evidence>
<organism>
    <name type="scientific">Fusobacterium nucleatum subsp. nucleatum (strain ATCC 25586 / DSM 15643 / BCRC 10681 / CIP 101130 / JCM 8532 / KCTC 2640 / LMG 13131 / VPI 4355)</name>
    <dbReference type="NCBI Taxonomy" id="190304"/>
    <lineage>
        <taxon>Bacteria</taxon>
        <taxon>Fusobacteriati</taxon>
        <taxon>Fusobacteriota</taxon>
        <taxon>Fusobacteriia</taxon>
        <taxon>Fusobacteriales</taxon>
        <taxon>Fusobacteriaceae</taxon>
        <taxon>Fusobacterium</taxon>
    </lineage>
</organism>
<dbReference type="EMBL" id="AE009951">
    <property type="protein sequence ID" value="AAL94962.1"/>
    <property type="molecule type" value="Genomic_DNA"/>
</dbReference>
<dbReference type="RefSeq" id="NP_603663.1">
    <property type="nucleotide sequence ID" value="NC_003454.1"/>
</dbReference>
<dbReference type="SMR" id="Q8RFE0"/>
<dbReference type="FunCoup" id="Q8RFE0">
    <property type="interactions" value="196"/>
</dbReference>
<dbReference type="STRING" id="190304.FN0766"/>
<dbReference type="PaxDb" id="190304-FN0766"/>
<dbReference type="EnsemblBacteria" id="AAL94962">
    <property type="protein sequence ID" value="AAL94962"/>
    <property type="gene ID" value="FN0766"/>
</dbReference>
<dbReference type="KEGG" id="fnu:FN0766"/>
<dbReference type="PATRIC" id="fig|190304.8.peg.1329"/>
<dbReference type="eggNOG" id="COG1970">
    <property type="taxonomic scope" value="Bacteria"/>
</dbReference>
<dbReference type="HOGENOM" id="CLU_095787_0_0_0"/>
<dbReference type="InParanoid" id="Q8RFE0"/>
<dbReference type="BioCyc" id="FNUC190304:G1FZS-1351-MONOMER"/>
<dbReference type="Proteomes" id="UP000002521">
    <property type="component" value="Chromosome"/>
</dbReference>
<dbReference type="GO" id="GO:0016020">
    <property type="term" value="C:membrane"/>
    <property type="evidence" value="ECO:0000318"/>
    <property type="project" value="GO_Central"/>
</dbReference>
<dbReference type="GO" id="GO:0005886">
    <property type="term" value="C:plasma membrane"/>
    <property type="evidence" value="ECO:0007669"/>
    <property type="project" value="UniProtKB-SubCell"/>
</dbReference>
<dbReference type="GO" id="GO:0008381">
    <property type="term" value="F:mechanosensitive monoatomic ion channel activity"/>
    <property type="evidence" value="ECO:0000318"/>
    <property type="project" value="GO_Central"/>
</dbReference>
<dbReference type="GO" id="GO:0006811">
    <property type="term" value="P:monoatomic ion transport"/>
    <property type="evidence" value="ECO:0000318"/>
    <property type="project" value="GO_Central"/>
</dbReference>
<dbReference type="FunFam" id="1.10.1200.120:FF:000001">
    <property type="entry name" value="Large-conductance mechanosensitive channel"/>
    <property type="match status" value="1"/>
</dbReference>
<dbReference type="Gene3D" id="1.10.1200.120">
    <property type="entry name" value="Large-conductance mechanosensitive channel, MscL, domain 1"/>
    <property type="match status" value="1"/>
</dbReference>
<dbReference type="HAMAP" id="MF_00115">
    <property type="entry name" value="MscL"/>
    <property type="match status" value="1"/>
</dbReference>
<dbReference type="InterPro" id="IPR019823">
    <property type="entry name" value="Mechanosensitive_channel_CS"/>
</dbReference>
<dbReference type="InterPro" id="IPR001185">
    <property type="entry name" value="MS_channel"/>
</dbReference>
<dbReference type="InterPro" id="IPR037673">
    <property type="entry name" value="MSC/AndL"/>
</dbReference>
<dbReference type="InterPro" id="IPR036019">
    <property type="entry name" value="MscL_channel"/>
</dbReference>
<dbReference type="NCBIfam" id="TIGR00220">
    <property type="entry name" value="mscL"/>
    <property type="match status" value="1"/>
</dbReference>
<dbReference type="NCBIfam" id="NF001843">
    <property type="entry name" value="PRK00567.1-4"/>
    <property type="match status" value="1"/>
</dbReference>
<dbReference type="PANTHER" id="PTHR30266:SF2">
    <property type="entry name" value="LARGE-CONDUCTANCE MECHANOSENSITIVE CHANNEL"/>
    <property type="match status" value="1"/>
</dbReference>
<dbReference type="PANTHER" id="PTHR30266">
    <property type="entry name" value="MECHANOSENSITIVE CHANNEL MSCL"/>
    <property type="match status" value="1"/>
</dbReference>
<dbReference type="Pfam" id="PF01741">
    <property type="entry name" value="MscL"/>
    <property type="match status" value="1"/>
</dbReference>
<dbReference type="PRINTS" id="PR01264">
    <property type="entry name" value="MECHCHANNEL"/>
</dbReference>
<dbReference type="SUPFAM" id="SSF81330">
    <property type="entry name" value="Gated mechanosensitive channel"/>
    <property type="match status" value="1"/>
</dbReference>
<dbReference type="PROSITE" id="PS01327">
    <property type="entry name" value="MSCL"/>
    <property type="match status" value="1"/>
</dbReference>
<name>MSCL_FUSNN</name>
<gene>
    <name evidence="1" type="primary">mscL</name>
    <name type="ordered locus">FN0766</name>
</gene>
<sequence length="142" mass="15407">MVLGGLMKLFDEFKAFVMRGNVVDLAVGVIIGAAFGKIVTSLVNDIFMPIIGMIIGNIDFSSLVIKLGEPVEGAEQAAIRYGMFIQEIVNFLIIALCVFVAIKLINKLQKKKEEASAPAPGPTKEEVLLTEIRDALNKIAEK</sequence>
<reference key="1">
    <citation type="journal article" date="2002" name="J. Bacteriol.">
        <title>Genome sequence and analysis of the oral bacterium Fusobacterium nucleatum strain ATCC 25586.</title>
        <authorList>
            <person name="Kapatral V."/>
            <person name="Anderson I."/>
            <person name="Ivanova N."/>
            <person name="Reznik G."/>
            <person name="Los T."/>
            <person name="Lykidis A."/>
            <person name="Bhattacharyya A."/>
            <person name="Bartman A."/>
            <person name="Gardner W."/>
            <person name="Grechkin G."/>
            <person name="Zhu L."/>
            <person name="Vasieva O."/>
            <person name="Chu L."/>
            <person name="Kogan Y."/>
            <person name="Chaga O."/>
            <person name="Goltsman E."/>
            <person name="Bernal A."/>
            <person name="Larsen N."/>
            <person name="D'Souza M."/>
            <person name="Walunas T."/>
            <person name="Pusch G."/>
            <person name="Haselkorn R."/>
            <person name="Fonstein M."/>
            <person name="Kyrpides N.C."/>
            <person name="Overbeek R."/>
        </authorList>
    </citation>
    <scope>NUCLEOTIDE SEQUENCE [LARGE SCALE GENOMIC DNA]</scope>
    <source>
        <strain>ATCC 25586 / DSM 15643 / BCRC 10681 / CIP 101130 / JCM 8532 / KCTC 2640 / LMG 13131 / VPI 4355</strain>
    </source>
</reference>
<feature type="chain" id="PRO_0000238000" description="Large-conductance mechanosensitive channel">
    <location>
        <begin position="1"/>
        <end position="142"/>
    </location>
</feature>
<feature type="transmembrane region" description="Helical" evidence="1">
    <location>
        <begin position="15"/>
        <end position="35"/>
    </location>
</feature>
<feature type="transmembrane region" description="Helical" evidence="1">
    <location>
        <begin position="38"/>
        <end position="58"/>
    </location>
</feature>
<feature type="transmembrane region" description="Helical" evidence="1">
    <location>
        <begin position="82"/>
        <end position="102"/>
    </location>
</feature>
<comment type="function">
    <text evidence="1">Channel that opens in response to stretch forces in the membrane lipid bilayer. May participate in the regulation of osmotic pressure changes within the cell.</text>
</comment>
<comment type="subunit">
    <text evidence="1">Homopentamer.</text>
</comment>
<comment type="subcellular location">
    <subcellularLocation>
        <location evidence="1">Cell inner membrane</location>
        <topology evidence="1">Multi-pass membrane protein</topology>
    </subcellularLocation>
</comment>
<comment type="similarity">
    <text evidence="1">Belongs to the MscL family.</text>
</comment>
<protein>
    <recommendedName>
        <fullName evidence="1">Large-conductance mechanosensitive channel</fullName>
    </recommendedName>
</protein>
<keyword id="KW-0997">Cell inner membrane</keyword>
<keyword id="KW-1003">Cell membrane</keyword>
<keyword id="KW-0407">Ion channel</keyword>
<keyword id="KW-0406">Ion transport</keyword>
<keyword id="KW-0472">Membrane</keyword>
<keyword id="KW-1185">Reference proteome</keyword>
<keyword id="KW-0812">Transmembrane</keyword>
<keyword id="KW-1133">Transmembrane helix</keyword>
<keyword id="KW-0813">Transport</keyword>